<accession>O70535</accession>
<dbReference type="EMBL" id="D86345">
    <property type="protein sequence ID" value="BAA25907.1"/>
    <property type="molecule type" value="mRNA"/>
</dbReference>
<dbReference type="RefSeq" id="NP_112310.1">
    <property type="nucleotide sequence ID" value="NM_031048.1"/>
</dbReference>
<dbReference type="SMR" id="O70535"/>
<dbReference type="FunCoup" id="O70535">
    <property type="interactions" value="702"/>
</dbReference>
<dbReference type="STRING" id="10116.ENSRNOP00000016036"/>
<dbReference type="GlyCosmos" id="O70535">
    <property type="glycosylation" value="16 sites, No reported glycans"/>
</dbReference>
<dbReference type="GlyGen" id="O70535">
    <property type="glycosylation" value="17 sites"/>
</dbReference>
<dbReference type="PhosphoSitePlus" id="O70535"/>
<dbReference type="SwissPalm" id="O70535"/>
<dbReference type="PaxDb" id="10116-ENSRNOP00000016036"/>
<dbReference type="GeneID" id="81680"/>
<dbReference type="KEGG" id="rno:81680"/>
<dbReference type="UCSC" id="RGD:621431">
    <property type="organism name" value="rat"/>
</dbReference>
<dbReference type="AGR" id="RGD:621431"/>
<dbReference type="CTD" id="3977"/>
<dbReference type="RGD" id="621431">
    <property type="gene designation" value="Lifr"/>
</dbReference>
<dbReference type="eggNOG" id="ENOG502QQF6">
    <property type="taxonomic scope" value="Eukaryota"/>
</dbReference>
<dbReference type="InParanoid" id="O70535"/>
<dbReference type="OrthoDB" id="6382334at2759"/>
<dbReference type="PhylomeDB" id="O70535"/>
<dbReference type="Reactome" id="R-RNO-6788467">
    <property type="pathway name" value="IL-6-type cytokine receptor ligand interactions"/>
</dbReference>
<dbReference type="PRO" id="PR:O70535"/>
<dbReference type="Proteomes" id="UP000002494">
    <property type="component" value="Unplaced"/>
</dbReference>
<dbReference type="GO" id="GO:0009897">
    <property type="term" value="C:external side of plasma membrane"/>
    <property type="evidence" value="ECO:0000318"/>
    <property type="project" value="GO_Central"/>
</dbReference>
<dbReference type="GO" id="GO:0043235">
    <property type="term" value="C:receptor complex"/>
    <property type="evidence" value="ECO:0000266"/>
    <property type="project" value="RGD"/>
</dbReference>
<dbReference type="GO" id="GO:0005127">
    <property type="term" value="F:ciliary neurotrophic factor receptor binding"/>
    <property type="evidence" value="ECO:0000266"/>
    <property type="project" value="RGD"/>
</dbReference>
<dbReference type="GO" id="GO:0019955">
    <property type="term" value="F:cytokine binding"/>
    <property type="evidence" value="ECO:0000315"/>
    <property type="project" value="RGD"/>
</dbReference>
<dbReference type="GO" id="GO:0004896">
    <property type="term" value="F:cytokine receptor activity"/>
    <property type="evidence" value="ECO:0000318"/>
    <property type="project" value="GO_Central"/>
</dbReference>
<dbReference type="GO" id="GO:0019838">
    <property type="term" value="F:growth factor binding"/>
    <property type="evidence" value="ECO:0000266"/>
    <property type="project" value="RGD"/>
</dbReference>
<dbReference type="GO" id="GO:0004923">
    <property type="term" value="F:leukemia inhibitory factor receptor activity"/>
    <property type="evidence" value="ECO:0000315"/>
    <property type="project" value="RGD"/>
</dbReference>
<dbReference type="GO" id="GO:0031100">
    <property type="term" value="P:animal organ regeneration"/>
    <property type="evidence" value="ECO:0000315"/>
    <property type="project" value="RGD"/>
</dbReference>
<dbReference type="GO" id="GO:0070120">
    <property type="term" value="P:ciliary neurotrophic factor-mediated signaling pathway"/>
    <property type="evidence" value="ECO:0000266"/>
    <property type="project" value="RGD"/>
</dbReference>
<dbReference type="GO" id="GO:0019221">
    <property type="term" value="P:cytokine-mediated signaling pathway"/>
    <property type="evidence" value="ECO:0000266"/>
    <property type="project" value="RGD"/>
</dbReference>
<dbReference type="GO" id="GO:0048861">
    <property type="term" value="P:leukemia inhibitory factor signaling pathway"/>
    <property type="evidence" value="ECO:0000266"/>
    <property type="project" value="RGD"/>
</dbReference>
<dbReference type="GO" id="GO:0010656">
    <property type="term" value="P:negative regulation of muscle cell apoptotic process"/>
    <property type="evidence" value="ECO:0000315"/>
    <property type="project" value="RGD"/>
</dbReference>
<dbReference type="GO" id="GO:0048812">
    <property type="term" value="P:neuron projection morphogenesis"/>
    <property type="evidence" value="ECO:0000314"/>
    <property type="project" value="RGD"/>
</dbReference>
<dbReference type="GO" id="GO:0038165">
    <property type="term" value="P:oncostatin-M-mediated signaling pathway"/>
    <property type="evidence" value="ECO:0000266"/>
    <property type="project" value="RGD"/>
</dbReference>
<dbReference type="GO" id="GO:0008284">
    <property type="term" value="P:positive regulation of cell population proliferation"/>
    <property type="evidence" value="ECO:0000266"/>
    <property type="project" value="RGD"/>
</dbReference>
<dbReference type="GO" id="GO:0034097">
    <property type="term" value="P:response to cytokine"/>
    <property type="evidence" value="ECO:0000266"/>
    <property type="project" value="RGD"/>
</dbReference>
<dbReference type="CDD" id="cd00063">
    <property type="entry name" value="FN3"/>
    <property type="match status" value="3"/>
</dbReference>
<dbReference type="FunFam" id="2.60.40.10:FF:000578">
    <property type="entry name" value="Leukemia inhibitory factor receptor"/>
    <property type="match status" value="1"/>
</dbReference>
<dbReference type="FunFam" id="2.60.40.10:FF:000607">
    <property type="entry name" value="Leukemia inhibitory factor receptor"/>
    <property type="match status" value="1"/>
</dbReference>
<dbReference type="FunFam" id="2.60.40.10:FF:000657">
    <property type="entry name" value="Leukemia inhibitory factor receptor"/>
    <property type="match status" value="1"/>
</dbReference>
<dbReference type="FunFam" id="2.60.40.10:FF:000738">
    <property type="entry name" value="Leukemia inhibitory factor receptor"/>
    <property type="match status" value="1"/>
</dbReference>
<dbReference type="FunFam" id="2.60.40.10:FF:000808">
    <property type="entry name" value="Leukemia inhibitory factor receptor"/>
    <property type="match status" value="1"/>
</dbReference>
<dbReference type="FunFam" id="2.60.40.10:FF:001265">
    <property type="entry name" value="Leukemia inhibitory factor receptor"/>
    <property type="match status" value="1"/>
</dbReference>
<dbReference type="FunFam" id="2.60.40.10:FF:001011">
    <property type="entry name" value="leukemia inhibitory factor receptor"/>
    <property type="match status" value="1"/>
</dbReference>
<dbReference type="FunFam" id="2.60.40.10:FF:001124">
    <property type="entry name" value="leukemia inhibitory factor receptor"/>
    <property type="match status" value="1"/>
</dbReference>
<dbReference type="Gene3D" id="2.60.40.10">
    <property type="entry name" value="Immunoglobulins"/>
    <property type="match status" value="8"/>
</dbReference>
<dbReference type="InterPro" id="IPR003961">
    <property type="entry name" value="FN3_dom"/>
</dbReference>
<dbReference type="InterPro" id="IPR036116">
    <property type="entry name" value="FN3_sf"/>
</dbReference>
<dbReference type="InterPro" id="IPR003529">
    <property type="entry name" value="Hematopoietin_rcpt_Gp130_CS"/>
</dbReference>
<dbReference type="InterPro" id="IPR013783">
    <property type="entry name" value="Ig-like_fold"/>
</dbReference>
<dbReference type="InterPro" id="IPR048497">
    <property type="entry name" value="LIF-R-like_Ig-like"/>
</dbReference>
<dbReference type="InterPro" id="IPR040817">
    <property type="entry name" value="LIFR_D2"/>
</dbReference>
<dbReference type="InterPro" id="IPR040901">
    <property type="entry name" value="LIFR_N"/>
</dbReference>
<dbReference type="InterPro" id="IPR050379">
    <property type="entry name" value="Type-I_Cytokine_Rcpt"/>
</dbReference>
<dbReference type="PANTHER" id="PTHR23036">
    <property type="entry name" value="CYTOKINE RECEPTOR"/>
    <property type="match status" value="1"/>
</dbReference>
<dbReference type="PANTHER" id="PTHR23036:SF105">
    <property type="entry name" value="LEUKEMIA INHIBITORY FACTOR RECEPTOR"/>
    <property type="match status" value="1"/>
</dbReference>
<dbReference type="Pfam" id="PF00041">
    <property type="entry name" value="fn3"/>
    <property type="match status" value="1"/>
</dbReference>
<dbReference type="Pfam" id="PF21177">
    <property type="entry name" value="LIF-R_Ig-like"/>
    <property type="match status" value="1"/>
</dbReference>
<dbReference type="Pfam" id="PF17971">
    <property type="entry name" value="LIFR_D2"/>
    <property type="match status" value="1"/>
</dbReference>
<dbReference type="Pfam" id="PF18207">
    <property type="entry name" value="LIFR_N"/>
    <property type="match status" value="1"/>
</dbReference>
<dbReference type="SMART" id="SM00060">
    <property type="entry name" value="FN3"/>
    <property type="match status" value="5"/>
</dbReference>
<dbReference type="SUPFAM" id="SSF49265">
    <property type="entry name" value="Fibronectin type III"/>
    <property type="match status" value="3"/>
</dbReference>
<dbReference type="PROSITE" id="PS50853">
    <property type="entry name" value="FN3"/>
    <property type="match status" value="4"/>
</dbReference>
<dbReference type="PROSITE" id="PS01353">
    <property type="entry name" value="HEMATOPO_REC_L_F2"/>
    <property type="match status" value="1"/>
</dbReference>
<sequence length="1093" mass="122394">MGAFSWWRQPSWMADNKRGRMTPSLPWLLSALTLLHLMMHVNGLKRGVQQDLKCTTNNMRVWDCSWPAPLGVSPGTVKDICIKDRPHSCHRLETTNVKIPALSPGDHEVTINYQNGFQSKFTLNEKDVSLVPDTPEILSLSADFSTSTLQLKWNDKGSALPYPSNATWEVKVLQNPRTEPVALVSLNTVLSGKDKGHHWNWTSELPLQCATHSVSIRWHIDYPRFSGYKEWSEWSPLKNISWTRNTETNVFPQDKVVLAGSNMTICCISTTKVLSGQIGNTFRPLIHLYGETVAINILNIPVSENSGSNVIFSTVDDVYGTVVFAGYPPDVPQKLSCETHDLKEIICSWNPGRITGLVGPRNTEYTLFESISGKSAVFHRFEELANETYWLTLKMAPDQEIHNFTLTARNPLGQTESAIVINATERVALHVPISLKVKDVNSTVVTLSWYLPGNFTKINLVCQIEICKANSKKEVRNVTMRGAEDSTYHVAVDKLNPYTIYTFRVRCSSETFWKWSKWSNEKRYLTTEATPSKGPDTWREWSSDGKNLIIYWKPLPINEANGKILSYNVSCSSSEETQSLSEILDPQHKAEIKVNKNDYIISVVARNSAGSSPPSKIASMEIPNDDITVEQAVGIGNRIFLSWQHNPNMTCDYVIKWCNSSWSEPCLLDWIKVPSNSTGTVIESDQFQPGVRYNFYLYGCTNQGYQLLRSTIGYIEELAPIVAPNFTVEDTSADSILVKWDDIPVEELRGFLRGYLFYFQKGERDTPKTRSLETSHSDIKLKNITDISQKTLRIADLQGKTSYHLVLRAYTHGGLGPEKSMFVVTKENSVGLIIAILIPVAVAVIVGVVTSILCYRKREWIKETFYPDIPNPENCKALQFQKSVCEGSNALKTLEMNPCTPNHVEVLESRSIPPKIEDTEITSPVSERPGESSETDPENQAAVSYCPPIIEEEITNPAADEAGGASQVVYIDVQSMYQPQAKAEDEQDTDPVMVAGYKPQMRLPINPTAEDTTAEDEADKTAGYRPQANVNTWNLVSPDSPRSTDSNSEVVSFGSPCSINSRQFLIPPKDEDSPKSNGGGWSFTNFFQNKPND</sequence>
<protein>
    <recommendedName>
        <fullName>Leukemia inhibitory factor receptor</fullName>
        <shortName>LIF receptor</shortName>
        <shortName>LIF-R</shortName>
    </recommendedName>
    <cdAntigenName>CD118</cdAntigenName>
</protein>
<comment type="function">
    <text evidence="1">Signal-transducing molecule. May have a common pathway with IL6ST. The soluble form inhibits the biological activity of LIF by blocking its binding to receptors on target cells (By similarity).</text>
</comment>
<comment type="subunit">
    <text evidence="1">Heterodimer composed of LIFR and IL6ST. The heterodimer formed by LIFR and IL6ST interacts with the complex formed by CNTF and CNTFR (By similarity).</text>
</comment>
<comment type="subcellular location">
    <subcellularLocation>
        <location evidence="1">Cell membrane</location>
        <topology evidence="1">Single-pass type I membrane protein</topology>
    </subcellularLocation>
</comment>
<comment type="domain">
    <text>The WSXWS motif appears to be necessary for proper protein folding and thereby efficient intracellular transport and cell-surface receptor binding.</text>
</comment>
<comment type="domain">
    <text>The box 1 motif is required for JAK interaction and/or activation.</text>
</comment>
<comment type="similarity">
    <text evidence="7">Belongs to the type I cytokine receptor family. Type 2 subfamily.</text>
</comment>
<evidence type="ECO:0000250" key="1"/>
<evidence type="ECO:0000250" key="2">
    <source>
        <dbReference type="UniProtKB" id="P42702"/>
    </source>
</evidence>
<evidence type="ECO:0000250" key="3">
    <source>
        <dbReference type="UniProtKB" id="P42703"/>
    </source>
</evidence>
<evidence type="ECO:0000255" key="4"/>
<evidence type="ECO:0000255" key="5">
    <source>
        <dbReference type="PROSITE-ProRule" id="PRU00316"/>
    </source>
</evidence>
<evidence type="ECO:0000256" key="6">
    <source>
        <dbReference type="SAM" id="MobiDB-lite"/>
    </source>
</evidence>
<evidence type="ECO:0000305" key="7"/>
<keyword id="KW-1003">Cell membrane</keyword>
<keyword id="KW-1015">Disulfide bond</keyword>
<keyword id="KW-0325">Glycoprotein</keyword>
<keyword id="KW-0472">Membrane</keyword>
<keyword id="KW-0597">Phosphoprotein</keyword>
<keyword id="KW-0675">Receptor</keyword>
<keyword id="KW-1185">Reference proteome</keyword>
<keyword id="KW-0677">Repeat</keyword>
<keyword id="KW-0732">Signal</keyword>
<keyword id="KW-0812">Transmembrane</keyword>
<keyword id="KW-1133">Transmembrane helix</keyword>
<gene>
    <name type="primary">Lifr</name>
</gene>
<feature type="signal peptide" evidence="4">
    <location>
        <begin position="1"/>
        <end position="43"/>
    </location>
</feature>
<feature type="chain" id="PRO_0000228095" description="Leukemia inhibitory factor receptor">
    <location>
        <begin position="44"/>
        <end position="1093"/>
    </location>
</feature>
<feature type="topological domain" description="Extracellular" evidence="4">
    <location>
        <begin position="44"/>
        <end position="829"/>
    </location>
</feature>
<feature type="transmembrane region" description="Helical" evidence="4">
    <location>
        <begin position="830"/>
        <end position="850"/>
    </location>
</feature>
<feature type="topological domain" description="Cytoplasmic" evidence="4">
    <location>
        <begin position="851"/>
        <end position="1093"/>
    </location>
</feature>
<feature type="domain" description="Fibronectin type-III 1" evidence="5">
    <location>
        <begin position="45"/>
        <end position="127"/>
    </location>
</feature>
<feature type="domain" description="Fibronectin type-III 2" evidence="5">
    <location>
        <begin position="331"/>
        <end position="428"/>
    </location>
</feature>
<feature type="domain" description="Fibronectin type-III 3" evidence="5">
    <location>
        <begin position="431"/>
        <end position="530"/>
    </location>
</feature>
<feature type="domain" description="Fibronectin type-III 4" evidence="5">
    <location>
        <begin position="534"/>
        <end position="625"/>
    </location>
</feature>
<feature type="domain" description="Fibronectin type-III 5" evidence="5">
    <location>
        <begin position="623"/>
        <end position="715"/>
    </location>
</feature>
<feature type="domain" description="Fibronectin type-III 6" evidence="5">
    <location>
        <begin position="720"/>
        <end position="829"/>
    </location>
</feature>
<feature type="region of interest" description="Disordered" evidence="6">
    <location>
        <begin position="908"/>
        <end position="941"/>
    </location>
</feature>
<feature type="region of interest" description="Disordered" evidence="6">
    <location>
        <begin position="1003"/>
        <end position="1093"/>
    </location>
</feature>
<feature type="short sequence motif" description="WSXWS motif">
    <location>
        <begin position="515"/>
        <end position="519"/>
    </location>
</feature>
<feature type="short sequence motif" description="Box 1 motif">
    <location>
        <begin position="865"/>
        <end position="873"/>
    </location>
</feature>
<feature type="compositionally biased region" description="Polar residues" evidence="6">
    <location>
        <begin position="1028"/>
        <end position="1063"/>
    </location>
</feature>
<feature type="compositionally biased region" description="Polar residues" evidence="6">
    <location>
        <begin position="1082"/>
        <end position="1093"/>
    </location>
</feature>
<feature type="modified residue" description="Phosphoserine" evidence="2">
    <location>
        <position position="923"/>
    </location>
</feature>
<feature type="modified residue" description="Phosphoserine" evidence="3">
    <location>
        <position position="1040"/>
    </location>
</feature>
<feature type="glycosylation site" description="N-linked (GlcNAc...) asparagine" evidence="4">
    <location>
        <position position="165"/>
    </location>
</feature>
<feature type="glycosylation site" description="N-linked (GlcNAc...) asparagine" evidence="4">
    <location>
        <position position="200"/>
    </location>
</feature>
<feature type="glycosylation site" description="N-linked (GlcNAc...) asparagine" evidence="4">
    <location>
        <position position="239"/>
    </location>
</feature>
<feature type="glycosylation site" description="N-linked (GlcNAc...) asparagine" evidence="4">
    <location>
        <position position="262"/>
    </location>
</feature>
<feature type="glycosylation site" description="N-linked (GlcNAc...) asparagine" evidence="4">
    <location>
        <position position="386"/>
    </location>
</feature>
<feature type="glycosylation site" description="N-linked (GlcNAc...) asparagine" evidence="4">
    <location>
        <position position="403"/>
    </location>
</feature>
<feature type="glycosylation site" description="N-linked (GlcNAc...) asparagine" evidence="4">
    <location>
        <position position="422"/>
    </location>
</feature>
<feature type="glycosylation site" description="N-linked (GlcNAc...) asparagine" evidence="4">
    <location>
        <position position="441"/>
    </location>
</feature>
<feature type="glycosylation site" description="N-linked (GlcNAc...) asparagine" evidence="4">
    <location>
        <position position="454"/>
    </location>
</feature>
<feature type="glycosylation site" description="N-linked (GlcNAc...) asparagine" evidence="4">
    <location>
        <position position="477"/>
    </location>
</feature>
<feature type="glycosylation site" description="N-linked (GlcNAc...) asparagine" evidence="4">
    <location>
        <position position="568"/>
    </location>
</feature>
<feature type="glycosylation site" description="N-linked (GlcNAc...) asparagine" evidence="4">
    <location>
        <position position="648"/>
    </location>
</feature>
<feature type="glycosylation site" description="N-linked (GlcNAc...) asparagine" evidence="4">
    <location>
        <position position="659"/>
    </location>
</feature>
<feature type="glycosylation site" description="N-linked (GlcNAc...) asparagine" evidence="4">
    <location>
        <position position="676"/>
    </location>
</feature>
<feature type="glycosylation site" description="N-linked (GlcNAc...) asparagine" evidence="4">
    <location>
        <position position="725"/>
    </location>
</feature>
<feature type="glycosylation site" description="N-linked (GlcNAc...) asparagine" evidence="4">
    <location>
        <position position="783"/>
    </location>
</feature>
<feature type="disulfide bond" evidence="1">
    <location>
        <begin position="54"/>
        <end position="64"/>
    </location>
</feature>
<feature type="disulfide bond" evidence="1">
    <location>
        <begin position="81"/>
        <end position="89"/>
    </location>
</feature>
<feature type="disulfide bond" evidence="1">
    <location>
        <begin position="209"/>
        <end position="266"/>
    </location>
</feature>
<feature type="disulfide bond" evidence="1">
    <location>
        <begin position="337"/>
        <end position="347"/>
    </location>
</feature>
<feature type="disulfide bond" evidence="1">
    <location>
        <begin position="462"/>
        <end position="507"/>
    </location>
</feature>
<name>LIFR_RAT</name>
<reference key="1">
    <citation type="journal article" date="1997" name="Biochim. Biophys. Acta">
        <title>Molecular cloning of rat leukemia inhibitory factor receptor alpha-chain gene and its expression during pregnancy.</title>
        <authorList>
            <person name="Aikawa J."/>
            <person name="Ikeda-Naiki S."/>
            <person name="Ohgane J."/>
            <person name="Min K.S."/>
            <person name="Imamura T."/>
            <person name="Sasai K."/>
            <person name="Shiota K."/>
            <person name="Ogawa T."/>
        </authorList>
    </citation>
    <scope>NUCLEOTIDE SEQUENCE [MRNA]</scope>
    <source>
        <strain>Wister-Imamichi</strain>
        <tissue>Liver</tissue>
    </source>
</reference>
<proteinExistence type="evidence at transcript level"/>
<organism>
    <name type="scientific">Rattus norvegicus</name>
    <name type="common">Rat</name>
    <dbReference type="NCBI Taxonomy" id="10116"/>
    <lineage>
        <taxon>Eukaryota</taxon>
        <taxon>Metazoa</taxon>
        <taxon>Chordata</taxon>
        <taxon>Craniata</taxon>
        <taxon>Vertebrata</taxon>
        <taxon>Euteleostomi</taxon>
        <taxon>Mammalia</taxon>
        <taxon>Eutheria</taxon>
        <taxon>Euarchontoglires</taxon>
        <taxon>Glires</taxon>
        <taxon>Rodentia</taxon>
        <taxon>Myomorpha</taxon>
        <taxon>Muroidea</taxon>
        <taxon>Muridae</taxon>
        <taxon>Murinae</taxon>
        <taxon>Rattus</taxon>
    </lineage>
</organism>